<name>TM2D3_XENTR</name>
<evidence type="ECO:0000255" key="1"/>
<evidence type="ECO:0000255" key="2">
    <source>
        <dbReference type="PROSITE-ProRule" id="PRU00498"/>
    </source>
</evidence>
<evidence type="ECO:0000305" key="3"/>
<keyword id="KW-0325">Glycoprotein</keyword>
<keyword id="KW-0472">Membrane</keyword>
<keyword id="KW-1185">Reference proteome</keyword>
<keyword id="KW-0732">Signal</keyword>
<keyword id="KW-0812">Transmembrane</keyword>
<keyword id="KW-1133">Transmembrane helix</keyword>
<gene>
    <name type="primary">tm2d3</name>
    <name type="ORF">TGas058n18.1</name>
</gene>
<protein>
    <recommendedName>
        <fullName>TM2 domain-containing protein 3</fullName>
    </recommendedName>
</protein>
<feature type="signal peptide" evidence="1">
    <location>
        <begin position="1"/>
        <end position="25"/>
    </location>
</feature>
<feature type="chain" id="PRO_0000298993" description="TM2 domain-containing protein 3">
    <location>
        <begin position="26"/>
        <end position="247"/>
    </location>
</feature>
<feature type="topological domain" description="Extracellular" evidence="3">
    <location>
        <begin position="26"/>
        <end position="179"/>
    </location>
</feature>
<feature type="transmembrane region" description="Helical" evidence="1">
    <location>
        <begin position="180"/>
        <end position="200"/>
    </location>
</feature>
<feature type="topological domain" description="Cytoplasmic" evidence="3">
    <location>
        <begin position="201"/>
        <end position="215"/>
    </location>
</feature>
<feature type="transmembrane region" description="Helical" evidence="1">
    <location>
        <begin position="216"/>
        <end position="236"/>
    </location>
</feature>
<feature type="topological domain" description="Extracellular" evidence="3">
    <location>
        <begin position="237"/>
        <end position="247"/>
    </location>
</feature>
<feature type="domain" description="TM2" evidence="1">
    <location>
        <begin position="183"/>
        <end position="231"/>
    </location>
</feature>
<feature type="glycosylation site" description="N-linked (GlcNAc...) asparagine" evidence="2">
    <location>
        <position position="87"/>
    </location>
</feature>
<feature type="glycosylation site" description="N-linked (GlcNAc...) asparagine" evidence="2">
    <location>
        <position position="99"/>
    </location>
</feature>
<feature type="glycosylation site" description="N-linked (GlcNAc...) asparagine" evidence="2">
    <location>
        <position position="139"/>
    </location>
</feature>
<feature type="glycosylation site" description="N-linked (GlcNAc...) asparagine" evidence="2">
    <location>
        <position position="155"/>
    </location>
</feature>
<feature type="glycosylation site" description="N-linked (GlcNAc...) asparagine" evidence="2">
    <location>
        <position position="169"/>
    </location>
</feature>
<feature type="glycosylation site" description="N-linked (GlcNAc...) asparagine" evidence="2">
    <location>
        <position position="179"/>
    </location>
</feature>
<comment type="subcellular location">
    <subcellularLocation>
        <location evidence="3">Membrane</location>
        <topology evidence="3">Multi-pass membrane protein</topology>
    </subcellularLocation>
</comment>
<comment type="similarity">
    <text evidence="3">Belongs to the TM2 family.</text>
</comment>
<organism>
    <name type="scientific">Xenopus tropicalis</name>
    <name type="common">Western clawed frog</name>
    <name type="synonym">Silurana tropicalis</name>
    <dbReference type="NCBI Taxonomy" id="8364"/>
    <lineage>
        <taxon>Eukaryota</taxon>
        <taxon>Metazoa</taxon>
        <taxon>Chordata</taxon>
        <taxon>Craniata</taxon>
        <taxon>Vertebrata</taxon>
        <taxon>Euteleostomi</taxon>
        <taxon>Amphibia</taxon>
        <taxon>Batrachia</taxon>
        <taxon>Anura</taxon>
        <taxon>Pipoidea</taxon>
        <taxon>Pipidae</taxon>
        <taxon>Xenopodinae</taxon>
        <taxon>Xenopus</taxon>
        <taxon>Silurana</taxon>
    </lineage>
</organism>
<reference key="1">
    <citation type="submission" date="2006-10" db="EMBL/GenBank/DDBJ databases">
        <authorList>
            <consortium name="Sanger Xenopus tropicalis EST/cDNA project"/>
        </authorList>
    </citation>
    <scope>NUCLEOTIDE SEQUENCE [LARGE SCALE MRNA]</scope>
    <source>
        <tissue>Gastrula</tissue>
    </source>
</reference>
<dbReference type="EMBL" id="CR942406">
    <property type="protein sequence ID" value="CAL49417.1"/>
    <property type="molecule type" value="mRNA"/>
</dbReference>
<dbReference type="FunCoup" id="Q07FZ2">
    <property type="interactions" value="1074"/>
</dbReference>
<dbReference type="STRING" id="8364.ENSXETP00000045160"/>
<dbReference type="GlyCosmos" id="Q07FZ2">
    <property type="glycosylation" value="6 sites, No reported glycans"/>
</dbReference>
<dbReference type="PaxDb" id="8364-ENSXETP00000055979"/>
<dbReference type="eggNOG" id="KOG4272">
    <property type="taxonomic scope" value="Eukaryota"/>
</dbReference>
<dbReference type="InParanoid" id="Q07FZ2"/>
<dbReference type="OrthoDB" id="10257855at2759"/>
<dbReference type="Proteomes" id="UP000008143">
    <property type="component" value="Unplaced"/>
</dbReference>
<dbReference type="GO" id="GO:0016020">
    <property type="term" value="C:membrane"/>
    <property type="evidence" value="ECO:0007669"/>
    <property type="project" value="UniProtKB-SubCell"/>
</dbReference>
<dbReference type="InterPro" id="IPR007829">
    <property type="entry name" value="TM2"/>
</dbReference>
<dbReference type="InterPro" id="IPR050932">
    <property type="entry name" value="TM2D1-3-like"/>
</dbReference>
<dbReference type="PANTHER" id="PTHR21016">
    <property type="entry name" value="BETA-AMYLOID BINDING PROTEIN-RELATED"/>
    <property type="match status" value="1"/>
</dbReference>
<dbReference type="PANTHER" id="PTHR21016:SF7">
    <property type="entry name" value="TM2 DOMAIN-CONTAINING PROTEIN 3"/>
    <property type="match status" value="1"/>
</dbReference>
<dbReference type="Pfam" id="PF05154">
    <property type="entry name" value="TM2"/>
    <property type="match status" value="1"/>
</dbReference>
<sequence length="247" mass="27464">MIPMMTLKRVCRVLLFITQMYVLSGRGFLSFEYSEPVAQPLKDHFPSSTIATSTKATATKIPDYMEKCPSNGQCSRLPSDCMTCATNYSCIYGKPVTFNCTAKNGVVCFDVNSQPQEYFTISMTCQFCWQLPPSDYVCNLSSSCKTVSCPRQRYNTTCTVLDHAHCLGNRTFPKMLYCNWTGGYKWSTALALSITLGGFGADRFYLGQWREGLGKLFSFGGLGIWTLIDVFLISVGYVGPADGSLYI</sequence>
<accession>Q07FZ2</accession>
<proteinExistence type="evidence at transcript level"/>